<evidence type="ECO:0000255" key="1">
    <source>
        <dbReference type="HAMAP-Rule" id="MF_01810"/>
    </source>
</evidence>
<evidence type="ECO:0000256" key="2">
    <source>
        <dbReference type="SAM" id="MobiDB-lite"/>
    </source>
</evidence>
<gene>
    <name evidence="1" type="primary">yidC</name>
    <name type="ordered locus">DvMF_0888</name>
</gene>
<feature type="chain" id="PRO_1000215968" description="Membrane protein insertase YidC">
    <location>
        <begin position="1"/>
        <end position="539"/>
    </location>
</feature>
<feature type="transmembrane region" description="Helical" evidence="1">
    <location>
        <begin position="7"/>
        <end position="27"/>
    </location>
</feature>
<feature type="transmembrane region" description="Helical" evidence="1">
    <location>
        <begin position="347"/>
        <end position="367"/>
    </location>
</feature>
<feature type="transmembrane region" description="Helical" evidence="1">
    <location>
        <begin position="418"/>
        <end position="438"/>
    </location>
</feature>
<feature type="transmembrane region" description="Helical" evidence="1">
    <location>
        <begin position="498"/>
        <end position="518"/>
    </location>
</feature>
<feature type="region of interest" description="Disordered" evidence="2">
    <location>
        <begin position="32"/>
        <end position="64"/>
    </location>
</feature>
<keyword id="KW-0997">Cell inner membrane</keyword>
<keyword id="KW-1003">Cell membrane</keyword>
<keyword id="KW-0143">Chaperone</keyword>
<keyword id="KW-0472">Membrane</keyword>
<keyword id="KW-0653">Protein transport</keyword>
<keyword id="KW-0812">Transmembrane</keyword>
<keyword id="KW-1133">Transmembrane helix</keyword>
<keyword id="KW-0813">Transport</keyword>
<protein>
    <recommendedName>
        <fullName evidence="1">Membrane protein insertase YidC</fullName>
    </recommendedName>
    <alternativeName>
        <fullName evidence="1">Foldase YidC</fullName>
    </alternativeName>
    <alternativeName>
        <fullName evidence="1">Membrane integrase YidC</fullName>
    </alternativeName>
    <alternativeName>
        <fullName evidence="1">Membrane protein YidC</fullName>
    </alternativeName>
</protein>
<name>YIDC_NITV9</name>
<comment type="function">
    <text evidence="1">Required for the insertion and/or proper folding and/or complex formation of integral membrane proteins into the membrane. Involved in integration of membrane proteins that insert both dependently and independently of the Sec translocase complex, as well as at least some lipoproteins. Aids folding of multispanning membrane proteins.</text>
</comment>
<comment type="subunit">
    <text evidence="1">Interacts with the Sec translocase complex via SecD. Specifically interacts with transmembrane segments of nascent integral membrane proteins during membrane integration.</text>
</comment>
<comment type="subcellular location">
    <subcellularLocation>
        <location evidence="1">Cell inner membrane</location>
        <topology evidence="1">Multi-pass membrane protein</topology>
    </subcellularLocation>
</comment>
<comment type="similarity">
    <text evidence="1">Belongs to the OXA1/ALB3/YidC family. Type 1 subfamily.</text>
</comment>
<proteinExistence type="inferred from homology"/>
<organism>
    <name type="scientific">Nitratidesulfovibrio vulgaris (strain DSM 19637 / Miyazaki F)</name>
    <name type="common">Desulfovibrio vulgaris</name>
    <dbReference type="NCBI Taxonomy" id="883"/>
    <lineage>
        <taxon>Bacteria</taxon>
        <taxon>Pseudomonadati</taxon>
        <taxon>Thermodesulfobacteriota</taxon>
        <taxon>Desulfovibrionia</taxon>
        <taxon>Desulfovibrionales</taxon>
        <taxon>Desulfovibrionaceae</taxon>
        <taxon>Nitratidesulfovibrio</taxon>
    </lineage>
</organism>
<reference key="1">
    <citation type="submission" date="2008-10" db="EMBL/GenBank/DDBJ databases">
        <title>Complete sequence of Desulfovibrio vulgaris str. 'Miyazaki F'.</title>
        <authorList>
            <person name="Lucas S."/>
            <person name="Copeland A."/>
            <person name="Lapidus A."/>
            <person name="Glavina del Rio T."/>
            <person name="Dalin E."/>
            <person name="Tice H."/>
            <person name="Bruce D."/>
            <person name="Goodwin L."/>
            <person name="Pitluck S."/>
            <person name="Sims D."/>
            <person name="Brettin T."/>
            <person name="Detter J.C."/>
            <person name="Han C."/>
            <person name="Larimer F."/>
            <person name="Land M."/>
            <person name="Hauser L."/>
            <person name="Kyrpides N."/>
            <person name="Mikhailova N."/>
            <person name="Hazen T.C."/>
            <person name="Richardson P."/>
        </authorList>
    </citation>
    <scope>NUCLEOTIDE SEQUENCE [LARGE SCALE GENOMIC DNA]</scope>
    <source>
        <strain>DSM 19637 / Miyazaki F</strain>
    </source>
</reference>
<dbReference type="EMBL" id="CP001197">
    <property type="protein sequence ID" value="ACL07843.1"/>
    <property type="molecule type" value="Genomic_DNA"/>
</dbReference>
<dbReference type="SMR" id="B8DP11"/>
<dbReference type="STRING" id="883.DvMF_0888"/>
<dbReference type="KEGG" id="dvm:DvMF_0888"/>
<dbReference type="eggNOG" id="COG0706">
    <property type="taxonomic scope" value="Bacteria"/>
</dbReference>
<dbReference type="HOGENOM" id="CLU_016535_3_0_7"/>
<dbReference type="OrthoDB" id="9780552at2"/>
<dbReference type="GO" id="GO:0005886">
    <property type="term" value="C:plasma membrane"/>
    <property type="evidence" value="ECO:0007669"/>
    <property type="project" value="UniProtKB-SubCell"/>
</dbReference>
<dbReference type="GO" id="GO:0032977">
    <property type="term" value="F:membrane insertase activity"/>
    <property type="evidence" value="ECO:0007669"/>
    <property type="project" value="InterPro"/>
</dbReference>
<dbReference type="GO" id="GO:0051205">
    <property type="term" value="P:protein insertion into membrane"/>
    <property type="evidence" value="ECO:0007669"/>
    <property type="project" value="TreeGrafter"/>
</dbReference>
<dbReference type="GO" id="GO:0015031">
    <property type="term" value="P:protein transport"/>
    <property type="evidence" value="ECO:0007669"/>
    <property type="project" value="UniProtKB-KW"/>
</dbReference>
<dbReference type="CDD" id="cd20070">
    <property type="entry name" value="5TM_YidC_Alb3"/>
    <property type="match status" value="1"/>
</dbReference>
<dbReference type="CDD" id="cd19961">
    <property type="entry name" value="EcYidC-like_peri"/>
    <property type="match status" value="1"/>
</dbReference>
<dbReference type="Gene3D" id="2.70.98.90">
    <property type="match status" value="1"/>
</dbReference>
<dbReference type="HAMAP" id="MF_01810">
    <property type="entry name" value="YidC_type1"/>
    <property type="match status" value="1"/>
</dbReference>
<dbReference type="InterPro" id="IPR019998">
    <property type="entry name" value="Membr_insert_YidC"/>
</dbReference>
<dbReference type="InterPro" id="IPR028053">
    <property type="entry name" value="Membr_insert_YidC_N"/>
</dbReference>
<dbReference type="InterPro" id="IPR001708">
    <property type="entry name" value="YidC/ALB3/OXA1/COX18"/>
</dbReference>
<dbReference type="InterPro" id="IPR028055">
    <property type="entry name" value="YidC/Oxa/ALB_C"/>
</dbReference>
<dbReference type="InterPro" id="IPR047196">
    <property type="entry name" value="YidC_ALB_C"/>
</dbReference>
<dbReference type="InterPro" id="IPR038221">
    <property type="entry name" value="YidC_periplasmic_sf"/>
</dbReference>
<dbReference type="NCBIfam" id="TIGR03593">
    <property type="entry name" value="yidC_nterm"/>
    <property type="match status" value="1"/>
</dbReference>
<dbReference type="NCBIfam" id="TIGR03592">
    <property type="entry name" value="yidC_oxa1_cterm"/>
    <property type="match status" value="1"/>
</dbReference>
<dbReference type="PANTHER" id="PTHR12428:SF65">
    <property type="entry name" value="CYTOCHROME C OXIDASE ASSEMBLY PROTEIN COX18, MITOCHONDRIAL"/>
    <property type="match status" value="1"/>
</dbReference>
<dbReference type="PANTHER" id="PTHR12428">
    <property type="entry name" value="OXA1"/>
    <property type="match status" value="1"/>
</dbReference>
<dbReference type="Pfam" id="PF02096">
    <property type="entry name" value="60KD_IMP"/>
    <property type="match status" value="1"/>
</dbReference>
<dbReference type="Pfam" id="PF14849">
    <property type="entry name" value="YidC_periplas"/>
    <property type="match status" value="1"/>
</dbReference>
<dbReference type="PRINTS" id="PR00701">
    <property type="entry name" value="60KDINNERMP"/>
</dbReference>
<dbReference type="PRINTS" id="PR01900">
    <property type="entry name" value="YIDCPROTEIN"/>
</dbReference>
<accession>B8DP11</accession>
<sequence>MESKRAIIAIALSFVVLVGWSYLADHMGWNGQPAPQAQQEETAPSASQAAPQSASQAAAPAPRAETPVFLPSAGREVTVVTPLYKAVLHSGGGVLKHFSLTRYRTAITAGAPAVDMVDTASTVMSPLGLLINGQPSWNTGQWSFDGGDLSLGAGQSGVLTFTGEVDGVRVVRELTFSADTYLISEKVRLAPLADARTVRLGFTVGTGNLSPNGGQYDHTRVAWLHDGSFSEKTSASDLEKGVLETGALSWGAVMSNYFLVAAAPVDTTGVTLKGKLQEGVYRVAMERGDVSIPAGGETTVACNYWFGPKDRGLLKEAPNQLAEAINLGWFSIIARPLVDMLEFFHKYVGNYGVAIILLTVVIKLVFWPLSHKSYKSMEQMKKLQPMLQKLREKHGDDREKMNEEMMRLYKTYKVNPAGGCLPMLVQIPVFFGLYQALLNAIELRHASFITHLPFTDMVWLADLSAKDPYYITPIVMGATMLLQQKLTPAPGDPTQAKIMMFMPVVFTFMFLSFPSGLVVYWLCNNVLSIAQQWWMLRKA</sequence>